<sequence length="372" mass="39600">MRSKVTGAQRWVVKIGSALLTADGKGLDRTAMGVWVEQMVALHEAGVELVLVSSGAVAAGMSRLGWTARPSAMHELQAAAAIGQMGLVQAWESSFAEHGRHTAQILLTHDDLSDRKRYLNARSTLRALVELKVIPVINENDTVVTDEIRFGDNDTLAALVANLVEADLLVILTDRDGMFDADPRNNPDAQLIYEARADDPALDAVAGGTGGALGRGGMQTKLRAARLAARSGAHTIIVGGRLDRVLDRLKAGERIGTLLSPERGMLAARKQWLAGHLQTRGTLVLDEGAVSALSQGNKSLLPVGVKQVQGGFRRGEMVVCVAPDGREIARGLANYSALEAQKIIGQPSDAIVGVLGYMAEPELVHRDNLILV</sequence>
<proteinExistence type="inferred from homology"/>
<organism>
    <name type="scientific">Pseudomonas fluorescens (strain ATCC BAA-477 / NRRL B-23932 / Pf-5)</name>
    <dbReference type="NCBI Taxonomy" id="220664"/>
    <lineage>
        <taxon>Bacteria</taxon>
        <taxon>Pseudomonadati</taxon>
        <taxon>Pseudomonadota</taxon>
        <taxon>Gammaproteobacteria</taxon>
        <taxon>Pseudomonadales</taxon>
        <taxon>Pseudomonadaceae</taxon>
        <taxon>Pseudomonas</taxon>
    </lineage>
</organism>
<protein>
    <recommendedName>
        <fullName evidence="1">Glutamate 5-kinase</fullName>
        <ecNumber evidence="1">2.7.2.11</ecNumber>
    </recommendedName>
    <alternativeName>
        <fullName evidence="1">Gamma-glutamyl kinase</fullName>
        <shortName evidence="1">GK</shortName>
    </alternativeName>
</protein>
<name>PROB_PSEF5</name>
<evidence type="ECO:0000255" key="1">
    <source>
        <dbReference type="HAMAP-Rule" id="MF_00456"/>
    </source>
</evidence>
<feature type="chain" id="PRO_0000230057" description="Glutamate 5-kinase">
    <location>
        <begin position="1"/>
        <end position="372"/>
    </location>
</feature>
<feature type="domain" description="PUA" evidence="1">
    <location>
        <begin position="280"/>
        <end position="358"/>
    </location>
</feature>
<feature type="binding site" evidence="1">
    <location>
        <position position="14"/>
    </location>
    <ligand>
        <name>ATP</name>
        <dbReference type="ChEBI" id="CHEBI:30616"/>
    </ligand>
</feature>
<feature type="binding site" evidence="1">
    <location>
        <position position="54"/>
    </location>
    <ligand>
        <name>substrate</name>
    </ligand>
</feature>
<feature type="binding site" evidence="1">
    <location>
        <position position="141"/>
    </location>
    <ligand>
        <name>substrate</name>
    </ligand>
</feature>
<feature type="binding site" evidence="1">
    <location>
        <position position="153"/>
    </location>
    <ligand>
        <name>substrate</name>
    </ligand>
</feature>
<feature type="binding site" evidence="1">
    <location>
        <begin position="173"/>
        <end position="174"/>
    </location>
    <ligand>
        <name>ATP</name>
        <dbReference type="ChEBI" id="CHEBI:30616"/>
    </ligand>
</feature>
<reference key="1">
    <citation type="journal article" date="2005" name="Nat. Biotechnol.">
        <title>Complete genome sequence of the plant commensal Pseudomonas fluorescens Pf-5.</title>
        <authorList>
            <person name="Paulsen I.T."/>
            <person name="Press C.M."/>
            <person name="Ravel J."/>
            <person name="Kobayashi D.Y."/>
            <person name="Myers G.S.A."/>
            <person name="Mavrodi D.V."/>
            <person name="DeBoy R.T."/>
            <person name="Seshadri R."/>
            <person name="Ren Q."/>
            <person name="Madupu R."/>
            <person name="Dodson R.J."/>
            <person name="Durkin A.S."/>
            <person name="Brinkac L.M."/>
            <person name="Daugherty S.C."/>
            <person name="Sullivan S.A."/>
            <person name="Rosovitz M.J."/>
            <person name="Gwinn M.L."/>
            <person name="Zhou L."/>
            <person name="Schneider D.J."/>
            <person name="Cartinhour S.W."/>
            <person name="Nelson W.C."/>
            <person name="Weidman J."/>
            <person name="Watkins K."/>
            <person name="Tran K."/>
            <person name="Khouri H."/>
            <person name="Pierson E.A."/>
            <person name="Pierson L.S. III"/>
            <person name="Thomashow L.S."/>
            <person name="Loper J.E."/>
        </authorList>
    </citation>
    <scope>NUCLEOTIDE SEQUENCE [LARGE SCALE GENOMIC DNA]</scope>
    <source>
        <strain>ATCC BAA-477 / NRRL B-23932 / Pf-5</strain>
    </source>
</reference>
<dbReference type="EC" id="2.7.2.11" evidence="1"/>
<dbReference type="EMBL" id="CP000076">
    <property type="protein sequence ID" value="AAY94536.2"/>
    <property type="molecule type" value="Genomic_DNA"/>
</dbReference>
<dbReference type="RefSeq" id="WP_011063553.1">
    <property type="nucleotide sequence ID" value="NC_004129.6"/>
</dbReference>
<dbReference type="SMR" id="Q4K5T9"/>
<dbReference type="STRING" id="220664.PFL_5326"/>
<dbReference type="GeneID" id="57478295"/>
<dbReference type="KEGG" id="pfl:PFL_5326"/>
<dbReference type="PATRIC" id="fig|220664.5.peg.5436"/>
<dbReference type="eggNOG" id="COG0263">
    <property type="taxonomic scope" value="Bacteria"/>
</dbReference>
<dbReference type="HOGENOM" id="CLU_025400_2_0_6"/>
<dbReference type="UniPathway" id="UPA00098">
    <property type="reaction ID" value="UER00359"/>
</dbReference>
<dbReference type="Proteomes" id="UP000008540">
    <property type="component" value="Chromosome"/>
</dbReference>
<dbReference type="GO" id="GO:0005829">
    <property type="term" value="C:cytosol"/>
    <property type="evidence" value="ECO:0007669"/>
    <property type="project" value="TreeGrafter"/>
</dbReference>
<dbReference type="GO" id="GO:0005524">
    <property type="term" value="F:ATP binding"/>
    <property type="evidence" value="ECO:0007669"/>
    <property type="project" value="UniProtKB-KW"/>
</dbReference>
<dbReference type="GO" id="GO:0004349">
    <property type="term" value="F:glutamate 5-kinase activity"/>
    <property type="evidence" value="ECO:0007669"/>
    <property type="project" value="UniProtKB-UniRule"/>
</dbReference>
<dbReference type="GO" id="GO:0003723">
    <property type="term" value="F:RNA binding"/>
    <property type="evidence" value="ECO:0007669"/>
    <property type="project" value="InterPro"/>
</dbReference>
<dbReference type="GO" id="GO:0055129">
    <property type="term" value="P:L-proline biosynthetic process"/>
    <property type="evidence" value="ECO:0007669"/>
    <property type="project" value="UniProtKB-UniRule"/>
</dbReference>
<dbReference type="CDD" id="cd04242">
    <property type="entry name" value="AAK_G5K_ProB"/>
    <property type="match status" value="1"/>
</dbReference>
<dbReference type="CDD" id="cd21157">
    <property type="entry name" value="PUA_G5K"/>
    <property type="match status" value="1"/>
</dbReference>
<dbReference type="FunFam" id="2.30.130.10:FF:000007">
    <property type="entry name" value="Glutamate 5-kinase"/>
    <property type="match status" value="1"/>
</dbReference>
<dbReference type="FunFam" id="3.40.1160.10:FF:000018">
    <property type="entry name" value="Glutamate 5-kinase"/>
    <property type="match status" value="1"/>
</dbReference>
<dbReference type="Gene3D" id="3.40.1160.10">
    <property type="entry name" value="Acetylglutamate kinase-like"/>
    <property type="match status" value="2"/>
</dbReference>
<dbReference type="Gene3D" id="2.30.130.10">
    <property type="entry name" value="PUA domain"/>
    <property type="match status" value="1"/>
</dbReference>
<dbReference type="HAMAP" id="MF_00456">
    <property type="entry name" value="ProB"/>
    <property type="match status" value="1"/>
</dbReference>
<dbReference type="InterPro" id="IPR036393">
    <property type="entry name" value="AceGlu_kinase-like_sf"/>
</dbReference>
<dbReference type="InterPro" id="IPR001048">
    <property type="entry name" value="Asp/Glu/Uridylate_kinase"/>
</dbReference>
<dbReference type="InterPro" id="IPR041739">
    <property type="entry name" value="G5K_ProB"/>
</dbReference>
<dbReference type="InterPro" id="IPR001057">
    <property type="entry name" value="Glu/AcGlu_kinase"/>
</dbReference>
<dbReference type="InterPro" id="IPR011529">
    <property type="entry name" value="Glu_5kinase"/>
</dbReference>
<dbReference type="InterPro" id="IPR005715">
    <property type="entry name" value="Glu_5kinase/COase_Synthase"/>
</dbReference>
<dbReference type="InterPro" id="IPR019797">
    <property type="entry name" value="Glutamate_5-kinase_CS"/>
</dbReference>
<dbReference type="InterPro" id="IPR002478">
    <property type="entry name" value="PUA"/>
</dbReference>
<dbReference type="InterPro" id="IPR015947">
    <property type="entry name" value="PUA-like_sf"/>
</dbReference>
<dbReference type="InterPro" id="IPR036974">
    <property type="entry name" value="PUA_sf"/>
</dbReference>
<dbReference type="NCBIfam" id="TIGR01027">
    <property type="entry name" value="proB"/>
    <property type="match status" value="1"/>
</dbReference>
<dbReference type="PANTHER" id="PTHR43654">
    <property type="entry name" value="GLUTAMATE 5-KINASE"/>
    <property type="match status" value="1"/>
</dbReference>
<dbReference type="PANTHER" id="PTHR43654:SF1">
    <property type="entry name" value="ISOPENTENYL PHOSPHATE KINASE"/>
    <property type="match status" value="1"/>
</dbReference>
<dbReference type="Pfam" id="PF00696">
    <property type="entry name" value="AA_kinase"/>
    <property type="match status" value="1"/>
</dbReference>
<dbReference type="Pfam" id="PF01472">
    <property type="entry name" value="PUA"/>
    <property type="match status" value="1"/>
</dbReference>
<dbReference type="PIRSF" id="PIRSF000729">
    <property type="entry name" value="GK"/>
    <property type="match status" value="1"/>
</dbReference>
<dbReference type="PRINTS" id="PR00474">
    <property type="entry name" value="GLU5KINASE"/>
</dbReference>
<dbReference type="SMART" id="SM00359">
    <property type="entry name" value="PUA"/>
    <property type="match status" value="1"/>
</dbReference>
<dbReference type="SUPFAM" id="SSF53633">
    <property type="entry name" value="Carbamate kinase-like"/>
    <property type="match status" value="1"/>
</dbReference>
<dbReference type="SUPFAM" id="SSF88697">
    <property type="entry name" value="PUA domain-like"/>
    <property type="match status" value="1"/>
</dbReference>
<dbReference type="PROSITE" id="PS00902">
    <property type="entry name" value="GLUTAMATE_5_KINASE"/>
    <property type="match status" value="1"/>
</dbReference>
<dbReference type="PROSITE" id="PS50890">
    <property type="entry name" value="PUA"/>
    <property type="match status" value="1"/>
</dbReference>
<accession>Q4K5T9</accession>
<gene>
    <name evidence="1" type="primary">proB</name>
    <name type="ordered locus">PFL_5326</name>
</gene>
<comment type="function">
    <text evidence="1">Catalyzes the transfer of a phosphate group to glutamate to form L-glutamate 5-phosphate.</text>
</comment>
<comment type="catalytic activity">
    <reaction evidence="1">
        <text>L-glutamate + ATP = L-glutamyl 5-phosphate + ADP</text>
        <dbReference type="Rhea" id="RHEA:14877"/>
        <dbReference type="ChEBI" id="CHEBI:29985"/>
        <dbReference type="ChEBI" id="CHEBI:30616"/>
        <dbReference type="ChEBI" id="CHEBI:58274"/>
        <dbReference type="ChEBI" id="CHEBI:456216"/>
        <dbReference type="EC" id="2.7.2.11"/>
    </reaction>
</comment>
<comment type="pathway">
    <text evidence="1">Amino-acid biosynthesis; L-proline biosynthesis; L-glutamate 5-semialdehyde from L-glutamate: step 1/2.</text>
</comment>
<comment type="subcellular location">
    <subcellularLocation>
        <location evidence="1">Cytoplasm</location>
    </subcellularLocation>
</comment>
<comment type="similarity">
    <text evidence="1">Belongs to the glutamate 5-kinase family.</text>
</comment>
<keyword id="KW-0028">Amino-acid biosynthesis</keyword>
<keyword id="KW-0067">ATP-binding</keyword>
<keyword id="KW-0963">Cytoplasm</keyword>
<keyword id="KW-0418">Kinase</keyword>
<keyword id="KW-0547">Nucleotide-binding</keyword>
<keyword id="KW-0641">Proline biosynthesis</keyword>
<keyword id="KW-0808">Transferase</keyword>